<protein>
    <recommendedName>
        <fullName evidence="7">Chronophin</fullName>
        <ecNumber evidence="2">3.1.3.16</ecNumber>
        <ecNumber evidence="4 5 6">3.1.3.74</ecNumber>
    </recommendedName>
    <alternativeName>
        <fullName evidence="7">Pyridoxal 5'-phosphate phosphatase</fullName>
    </alternativeName>
    <alternativeName>
        <fullName evidence="8">Pyridoxal phosphate phosphatase</fullName>
        <shortName evidence="8">PLP phosphatase</shortName>
    </alternativeName>
</protein>
<organism>
    <name type="scientific">Mus musculus</name>
    <name type="common">Mouse</name>
    <dbReference type="NCBI Taxonomy" id="10090"/>
    <lineage>
        <taxon>Eukaryota</taxon>
        <taxon>Metazoa</taxon>
        <taxon>Chordata</taxon>
        <taxon>Craniata</taxon>
        <taxon>Vertebrata</taxon>
        <taxon>Euteleostomi</taxon>
        <taxon>Mammalia</taxon>
        <taxon>Eutheria</taxon>
        <taxon>Euarchontoglires</taxon>
        <taxon>Glires</taxon>
        <taxon>Rodentia</taxon>
        <taxon>Myomorpha</taxon>
        <taxon>Muroidea</taxon>
        <taxon>Muridae</taxon>
        <taxon>Murinae</taxon>
        <taxon>Mus</taxon>
        <taxon>Mus</taxon>
    </lineage>
</organism>
<accession>P60487</accession>
<sequence>MARCERLRGAALRDVLGQAQGVLFDCDGVLWNGERIVPGAPELLQRLARAGKNTLFVSNNSRRARPELALRFARLGFAGLRAEQLFSSALCAARLLRQRLSGPPDASGAVFVLGGEGLRAELRAAGLRLAGDPGEDPRVRAVLVGYDEQFSFSRLTEACAHLRDPDCLLVATDRDPWHPLSDGSRTPGTGSLAAAVETASGRQALVVGKPSPYMFQCITEDFSVDPARTLMVGDRLETDILFGHRCGMTTVLTLTGVSSLEEAQAYLTAGQRDLVPHYYVESIADLMEGLED</sequence>
<dbReference type="EC" id="3.1.3.16" evidence="2"/>
<dbReference type="EC" id="3.1.3.74" evidence="4 5 6"/>
<dbReference type="EMBL" id="AY366300">
    <property type="protein sequence ID" value="AAR12209.1"/>
    <property type="molecule type" value="mRNA"/>
</dbReference>
<dbReference type="EMBL" id="BC058388">
    <property type="protein sequence ID" value="AAH58388.1"/>
    <property type="molecule type" value="mRNA"/>
</dbReference>
<dbReference type="CCDS" id="CCDS27627.1"/>
<dbReference type="RefSeq" id="NP_064667.2">
    <property type="nucleotide sequence ID" value="NM_020271.3"/>
</dbReference>
<dbReference type="PDB" id="4BKM">
    <property type="method" value="X-ray"/>
    <property type="resolution" value="2.65 A"/>
    <property type="chains" value="A/B/C/D=1-100, A/B/C/D=208-292"/>
</dbReference>
<dbReference type="PDB" id="4BX0">
    <property type="method" value="X-ray"/>
    <property type="resolution" value="1.75 A"/>
    <property type="chains" value="A=1-292"/>
</dbReference>
<dbReference type="PDB" id="4BX2">
    <property type="method" value="X-ray"/>
    <property type="resolution" value="2.19 A"/>
    <property type="chains" value="A/B=1-292"/>
</dbReference>
<dbReference type="PDB" id="4BX3">
    <property type="method" value="X-ray"/>
    <property type="resolution" value="2.19 A"/>
    <property type="chains" value="A/B=1-292"/>
</dbReference>
<dbReference type="PDB" id="5AES">
    <property type="method" value="X-ray"/>
    <property type="resolution" value="2.75 A"/>
    <property type="chains" value="A/B=1-292"/>
</dbReference>
<dbReference type="PDB" id="8QFW">
    <property type="method" value="X-ray"/>
    <property type="resolution" value="2.00 A"/>
    <property type="chains" value="A/B=1-291"/>
</dbReference>
<dbReference type="PDBsum" id="4BKM"/>
<dbReference type="PDBsum" id="4BX0"/>
<dbReference type="PDBsum" id="4BX2"/>
<dbReference type="PDBsum" id="4BX3"/>
<dbReference type="PDBsum" id="5AES"/>
<dbReference type="PDBsum" id="8QFW"/>
<dbReference type="SMR" id="P60487"/>
<dbReference type="BioGRID" id="208210">
    <property type="interactions" value="2"/>
</dbReference>
<dbReference type="FunCoup" id="P60487">
    <property type="interactions" value="264"/>
</dbReference>
<dbReference type="IntAct" id="P60487">
    <property type="interactions" value="1"/>
</dbReference>
<dbReference type="STRING" id="10090.ENSMUSP00000086796"/>
<dbReference type="BindingDB" id="P60487"/>
<dbReference type="ChEMBL" id="CHEMBL3425392"/>
<dbReference type="GlyGen" id="P60487">
    <property type="glycosylation" value="1 site, 1 O-linked glycan (1 site)"/>
</dbReference>
<dbReference type="iPTMnet" id="P60487"/>
<dbReference type="PhosphoSitePlus" id="P60487"/>
<dbReference type="SwissPalm" id="P60487"/>
<dbReference type="REPRODUCTION-2DPAGE" id="P60487"/>
<dbReference type="PeptideAtlas" id="P60487"/>
<dbReference type="ProteomicsDB" id="289453"/>
<dbReference type="Antibodypedia" id="34919">
    <property type="antibodies" value="110 antibodies from 26 providers"/>
</dbReference>
<dbReference type="DNASU" id="57028"/>
<dbReference type="Ensembl" id="ENSMUST00000089378.5">
    <property type="protein sequence ID" value="ENSMUSP00000086796.5"/>
    <property type="gene ID" value="ENSMUSG00000116165.2"/>
</dbReference>
<dbReference type="GeneID" id="57028"/>
<dbReference type="KEGG" id="mmu:57028"/>
<dbReference type="UCSC" id="uc007wru.1">
    <property type="organism name" value="mouse"/>
</dbReference>
<dbReference type="AGR" id="MGI:1919282"/>
<dbReference type="CTD" id="57026"/>
<dbReference type="MGI" id="MGI:1919282">
    <property type="gene designation" value="Pdxp"/>
</dbReference>
<dbReference type="VEuPathDB" id="HostDB:ENSMUSG00000116165"/>
<dbReference type="GeneTree" id="ENSGT00940000162045"/>
<dbReference type="HOGENOM" id="CLU_043473_0_1_1"/>
<dbReference type="InParanoid" id="P60487"/>
<dbReference type="OMA" id="AGLDFHI"/>
<dbReference type="OrthoDB" id="413953at2759"/>
<dbReference type="PhylomeDB" id="P60487"/>
<dbReference type="TreeFam" id="TF314344"/>
<dbReference type="BRENDA" id="3.1.3.74">
    <property type="organism ID" value="3474"/>
</dbReference>
<dbReference type="BioGRID-ORCS" id="57028">
    <property type="hits" value="1 hit in 44 CRISPR screens"/>
</dbReference>
<dbReference type="ChiTaRS" id="Pdxp">
    <property type="organism name" value="mouse"/>
</dbReference>
<dbReference type="EvolutionaryTrace" id="P60487"/>
<dbReference type="PRO" id="PR:P60487"/>
<dbReference type="Proteomes" id="UP000000589">
    <property type="component" value="Chromosome 15"/>
</dbReference>
<dbReference type="RNAct" id="P60487">
    <property type="molecule type" value="protein"/>
</dbReference>
<dbReference type="Bgee" id="ENSMUSG00000116165">
    <property type="expression patterns" value="Expressed in basal forebrain and 102 other cell types or tissues"/>
</dbReference>
<dbReference type="GO" id="GO:0015629">
    <property type="term" value="C:actin cytoskeleton"/>
    <property type="evidence" value="ECO:0007669"/>
    <property type="project" value="Ensembl"/>
</dbReference>
<dbReference type="GO" id="GO:0005911">
    <property type="term" value="C:cell-cell junction"/>
    <property type="evidence" value="ECO:0000314"/>
    <property type="project" value="MGI"/>
</dbReference>
<dbReference type="GO" id="GO:0032154">
    <property type="term" value="C:cleavage furrow"/>
    <property type="evidence" value="ECO:0007669"/>
    <property type="project" value="Ensembl"/>
</dbReference>
<dbReference type="GO" id="GO:0070938">
    <property type="term" value="C:contractile ring"/>
    <property type="evidence" value="ECO:0007669"/>
    <property type="project" value="Ensembl"/>
</dbReference>
<dbReference type="GO" id="GO:0005829">
    <property type="term" value="C:cytosol"/>
    <property type="evidence" value="ECO:0000250"/>
    <property type="project" value="UniProtKB"/>
</dbReference>
<dbReference type="GO" id="GO:0098978">
    <property type="term" value="C:glutamatergic synapse"/>
    <property type="evidence" value="ECO:0000314"/>
    <property type="project" value="SynGO"/>
</dbReference>
<dbReference type="GO" id="GO:0031258">
    <property type="term" value="C:lamellipodium membrane"/>
    <property type="evidence" value="ECO:0007669"/>
    <property type="project" value="UniProtKB-SubCell"/>
</dbReference>
<dbReference type="GO" id="GO:0030496">
    <property type="term" value="C:midbody"/>
    <property type="evidence" value="ECO:0007669"/>
    <property type="project" value="Ensembl"/>
</dbReference>
<dbReference type="GO" id="GO:0098794">
    <property type="term" value="C:postsynapse"/>
    <property type="evidence" value="ECO:0000314"/>
    <property type="project" value="SynGO"/>
</dbReference>
<dbReference type="GO" id="GO:0032587">
    <property type="term" value="C:ruffle membrane"/>
    <property type="evidence" value="ECO:0007669"/>
    <property type="project" value="UniProtKB-SubCell"/>
</dbReference>
<dbReference type="GO" id="GO:0031072">
    <property type="term" value="F:heat shock protein binding"/>
    <property type="evidence" value="ECO:0000266"/>
    <property type="project" value="MGI"/>
</dbReference>
<dbReference type="GO" id="GO:0000287">
    <property type="term" value="F:magnesium ion binding"/>
    <property type="evidence" value="ECO:0000314"/>
    <property type="project" value="UniProtKB"/>
</dbReference>
<dbReference type="GO" id="GO:0004721">
    <property type="term" value="F:phosphoprotein phosphatase activity"/>
    <property type="evidence" value="ECO:0000250"/>
    <property type="project" value="UniProtKB"/>
</dbReference>
<dbReference type="GO" id="GO:0042803">
    <property type="term" value="F:protein homodimerization activity"/>
    <property type="evidence" value="ECO:0000314"/>
    <property type="project" value="UniProtKB"/>
</dbReference>
<dbReference type="GO" id="GO:0004722">
    <property type="term" value="F:protein serine/threonine phosphatase activity"/>
    <property type="evidence" value="ECO:0007669"/>
    <property type="project" value="UniProtKB-EC"/>
</dbReference>
<dbReference type="GO" id="GO:0033883">
    <property type="term" value="F:pyridoxal phosphatase activity"/>
    <property type="evidence" value="ECO:0000314"/>
    <property type="project" value="UniProtKB"/>
</dbReference>
<dbReference type="GO" id="GO:0031247">
    <property type="term" value="P:actin rod assembly"/>
    <property type="evidence" value="ECO:0000266"/>
    <property type="project" value="MGI"/>
</dbReference>
<dbReference type="GO" id="GO:0071318">
    <property type="term" value="P:cellular response to ATP"/>
    <property type="evidence" value="ECO:0000266"/>
    <property type="project" value="MGI"/>
</dbReference>
<dbReference type="GO" id="GO:0016311">
    <property type="term" value="P:dephosphorylation"/>
    <property type="evidence" value="ECO:0000314"/>
    <property type="project" value="UniProtKB"/>
</dbReference>
<dbReference type="GO" id="GO:0030836">
    <property type="term" value="P:positive regulation of actin filament depolymerization"/>
    <property type="evidence" value="ECO:0000250"/>
    <property type="project" value="UniProtKB"/>
</dbReference>
<dbReference type="GO" id="GO:0006470">
    <property type="term" value="P:protein dephosphorylation"/>
    <property type="evidence" value="ECO:0000250"/>
    <property type="project" value="UniProtKB"/>
</dbReference>
<dbReference type="GO" id="GO:0032361">
    <property type="term" value="P:pyridoxal phosphate catabolic process"/>
    <property type="evidence" value="ECO:0000314"/>
    <property type="project" value="UniProtKB"/>
</dbReference>
<dbReference type="GO" id="GO:0032465">
    <property type="term" value="P:regulation of cytokinesis"/>
    <property type="evidence" value="ECO:0000250"/>
    <property type="project" value="UniProtKB"/>
</dbReference>
<dbReference type="GO" id="GO:0007088">
    <property type="term" value="P:regulation of mitotic nuclear division"/>
    <property type="evidence" value="ECO:0000250"/>
    <property type="project" value="UniProtKB"/>
</dbReference>
<dbReference type="GO" id="GO:0099159">
    <property type="term" value="P:regulation of modification of postsynaptic structure"/>
    <property type="evidence" value="ECO:0000314"/>
    <property type="project" value="SynGO"/>
</dbReference>
<dbReference type="CDD" id="cd07510">
    <property type="entry name" value="HAD_Pase_UmpH-like"/>
    <property type="match status" value="1"/>
</dbReference>
<dbReference type="FunFam" id="3.40.50.1000:FF:000140">
    <property type="entry name" value="Pyridoxal phosphate phosphatase"/>
    <property type="match status" value="1"/>
</dbReference>
<dbReference type="FunFam" id="3.40.50.1000:FF:000163">
    <property type="entry name" value="Pyridoxal phosphate phosphatase"/>
    <property type="match status" value="1"/>
</dbReference>
<dbReference type="Gene3D" id="3.40.50.1000">
    <property type="entry name" value="HAD superfamily/HAD-like"/>
    <property type="match status" value="2"/>
</dbReference>
<dbReference type="InterPro" id="IPR036412">
    <property type="entry name" value="HAD-like_sf"/>
</dbReference>
<dbReference type="InterPro" id="IPR006357">
    <property type="entry name" value="HAD-SF_hydro_IIA"/>
</dbReference>
<dbReference type="InterPro" id="IPR023214">
    <property type="entry name" value="HAD_sf"/>
</dbReference>
<dbReference type="InterPro" id="IPR006349">
    <property type="entry name" value="PGP_euk"/>
</dbReference>
<dbReference type="NCBIfam" id="TIGR01460">
    <property type="entry name" value="HAD-SF-IIA"/>
    <property type="match status" value="1"/>
</dbReference>
<dbReference type="NCBIfam" id="TIGR01452">
    <property type="entry name" value="PGP_euk"/>
    <property type="match status" value="1"/>
</dbReference>
<dbReference type="PANTHER" id="PTHR19288">
    <property type="entry name" value="4-NITROPHENYLPHOSPHATASE-RELATED"/>
    <property type="match status" value="1"/>
</dbReference>
<dbReference type="PANTHER" id="PTHR19288:SF94">
    <property type="entry name" value="CHRONOPHIN"/>
    <property type="match status" value="1"/>
</dbReference>
<dbReference type="Pfam" id="PF13344">
    <property type="entry name" value="Hydrolase_6"/>
    <property type="match status" value="1"/>
</dbReference>
<dbReference type="Pfam" id="PF13242">
    <property type="entry name" value="Hydrolase_like"/>
    <property type="match status" value="1"/>
</dbReference>
<dbReference type="PIRSF" id="PIRSF000915">
    <property type="entry name" value="PGP-type_phosphatase"/>
    <property type="match status" value="1"/>
</dbReference>
<dbReference type="SFLD" id="SFLDG01139">
    <property type="entry name" value="C2.A:_Pyridoxal_Phosphate_Phos"/>
    <property type="match status" value="1"/>
</dbReference>
<dbReference type="SFLD" id="SFLDS00003">
    <property type="entry name" value="Haloacid_Dehalogenase"/>
    <property type="match status" value="1"/>
</dbReference>
<dbReference type="SUPFAM" id="SSF56784">
    <property type="entry name" value="HAD-like"/>
    <property type="match status" value="1"/>
</dbReference>
<reference key="1">
    <citation type="journal article" date="2003" name="J. Biol. Chem.">
        <title>Human pyridoxal phosphatase. Molecular cloning, functional expression, and tissue distribution.</title>
        <authorList>
            <person name="Jang Y.M."/>
            <person name="Kim D.W."/>
            <person name="Kang T.-C."/>
            <person name="Won M.H."/>
            <person name="Baek N.-I."/>
            <person name="Moon B.J."/>
            <person name="Choi S.Y."/>
            <person name="Kwon O.-S."/>
        </authorList>
    </citation>
    <scope>NUCLEOTIDE SEQUENCE [MRNA]</scope>
    <source>
        <strain>SWR/J</strain>
        <tissue>Brain</tissue>
    </source>
</reference>
<reference key="2">
    <citation type="submission" date="2007-03" db="UniProtKB">
        <authorList>
            <person name="Lubec G."/>
            <person name="Klug S."/>
        </authorList>
    </citation>
    <scope>PROTEIN SEQUENCE OF 100-119 AND 141-154</scope>
    <scope>IDENTIFICATION BY MASS SPECTROMETRY</scope>
    <source>
        <tissue>Hippocampus</tissue>
    </source>
</reference>
<reference key="3">
    <citation type="journal article" date="2004" name="Genome Res.">
        <title>The status, quality, and expansion of the NIH full-length cDNA project: the Mammalian Gene Collection (MGC).</title>
        <authorList>
            <consortium name="The MGC Project Team"/>
        </authorList>
    </citation>
    <scope>NUCLEOTIDE SEQUENCE [LARGE SCALE MRNA] OF 136-292</scope>
    <source>
        <strain>C57BL/6J</strain>
        <tissue>Brain</tissue>
    </source>
</reference>
<reference key="4">
    <citation type="journal article" date="2010" name="Cell">
        <title>A tissue-specific atlas of mouse protein phosphorylation and expression.</title>
        <authorList>
            <person name="Huttlin E.L."/>
            <person name="Jedrychowski M.P."/>
            <person name="Elias J.E."/>
            <person name="Goswami T."/>
            <person name="Rad R."/>
            <person name="Beausoleil S.A."/>
            <person name="Villen J."/>
            <person name="Haas W."/>
            <person name="Sowa M.E."/>
            <person name="Gygi S.P."/>
        </authorList>
    </citation>
    <scope>IDENTIFICATION BY MASS SPECTROMETRY [LARGE SCALE ANALYSIS]</scope>
    <source>
        <tissue>Brain</tissue>
        <tissue>Liver</tissue>
        <tissue>Spleen</tissue>
    </source>
</reference>
<reference evidence="15 16 17" key="5">
    <citation type="journal article" date="2014" name="J. Biol. Chem.">
        <title>Chronophin dimerization is required for proper positioning of its substrate specificity loop.</title>
        <authorList>
            <person name="Kestler C."/>
            <person name="Knobloch G."/>
            <person name="Tessmer I."/>
            <person name="Jeanclos E."/>
            <person name="Schindelin H."/>
            <person name="Gohla A."/>
        </authorList>
    </citation>
    <scope>X-RAY CRYSTALLOGRAPHY (1.75 ANGSTROMS) IN COMPLEX WITH MAGNESIUM AND BERYLLIUM TRIFLUORIDE</scope>
    <scope>CATALYTIC ACTIVITY</scope>
    <scope>FUNCTION</scope>
    <scope>SUBUNIT</scope>
    <scope>BIOPHYSICOCHEMICAL PROPERTIES</scope>
    <scope>MUTAGENESIS OF 194-ALA-ALA-195</scope>
    <scope>ACTIVE SITE</scope>
</reference>
<reference evidence="14" key="6">
    <citation type="journal article" date="2014" name="J. Biol. Chem.">
        <title>Evolutionary and structural analyses of the mammalian haloacid dehalogenase-type phosphatases AUM and chronophin provide insight into the basis of their different substrate specificities.</title>
        <authorList>
            <person name="Seifried A."/>
            <person name="Knobloch G."/>
            <person name="Duraphe P.S."/>
            <person name="Segerer G."/>
            <person name="Manhard J."/>
            <person name="Schindelin H."/>
            <person name="Schultz J."/>
            <person name="Gohla A."/>
        </authorList>
    </citation>
    <scope>X-RAY CRYSTALLOGRAPHY (2.65 ANGSTROMS) OF 1-100 AND 208-233 IN COMPLEX WITH MAGNESIUM</scope>
    <scope>TISSUE SPECIFICITY</scope>
    <scope>CATALYTIC ACTIVITY</scope>
    <scope>COFACTOR</scope>
    <scope>ACTIVITY REGULATION</scope>
    <scope>FUNCTION</scope>
</reference>
<reference evidence="18" key="7">
    <citation type="journal article" date="2015" name="Bioorg. Med. Chem.">
        <title>Synthesis of hydrolysis-resistant pyridoxal 5'-phosphate analogs and their biochemical and X-ray crystallographic characterization with the pyridoxal phosphatase chronophin.</title>
        <authorList>
            <person name="Knobloch G."/>
            <person name="Jabari N."/>
            <person name="Stadlbauer S."/>
            <person name="Schindelin H."/>
            <person name="Kohn M."/>
            <person name="Gohla A."/>
        </authorList>
    </citation>
    <scope>X-RAY CRYSTALLOGRAPHY (2.75 ANGSTROMS) IN COMPLEX WITH MAGNESIUM AND INHIBITOR</scope>
    <scope>FUNCTION</scope>
    <scope>CATALYTIC ACTIVITY</scope>
    <scope>BIOPHYSICOCHEMICAL PROPERTIES</scope>
    <scope>COFACTOR</scope>
    <scope>SUBUNIT</scope>
    <scope>ACTIVE SITE</scope>
</reference>
<feature type="chain" id="PRO_0000068838" description="Chronophin">
    <location>
        <begin position="1"/>
        <end position="292"/>
    </location>
</feature>
<feature type="active site" description="Nucleophile" evidence="11 12 16 18">
    <location>
        <position position="25"/>
    </location>
</feature>
<feature type="active site" description="Proton donor" evidence="11 12 16 18">
    <location>
        <position position="27"/>
    </location>
</feature>
<feature type="binding site" evidence="4 5 6 14 15 16 17 18">
    <location>
        <position position="25"/>
    </location>
    <ligand>
        <name>Mg(2+)</name>
        <dbReference type="ChEBI" id="CHEBI:18420"/>
    </ligand>
</feature>
<feature type="binding site" evidence="4 5 6 14 15 16 17 18">
    <location>
        <position position="27"/>
    </location>
    <ligand>
        <name>Mg(2+)</name>
        <dbReference type="ChEBI" id="CHEBI:18420"/>
    </ligand>
</feature>
<feature type="binding site" evidence="5 6 16 18">
    <location>
        <begin position="58"/>
        <end position="60"/>
    </location>
    <ligand>
        <name>substrate</name>
    </ligand>
</feature>
<feature type="binding site" evidence="6 18">
    <location>
        <position position="178"/>
    </location>
    <ligand>
        <name>substrate</name>
    </ligand>
</feature>
<feature type="binding site" evidence="5 6 16 18">
    <location>
        <position position="209"/>
    </location>
    <ligand>
        <name>substrate</name>
    </ligand>
</feature>
<feature type="binding site" evidence="4 5 6 14 15 16 17 18">
    <location>
        <position position="234"/>
    </location>
    <ligand>
        <name>Mg(2+)</name>
        <dbReference type="ChEBI" id="CHEBI:18420"/>
    </ligand>
</feature>
<feature type="mutagenesis site" description="Abolishes homodimerization. Strongly decreases affinity for pyridoxal phosphate." evidence="5">
    <original>AA</original>
    <variation>KK</variation>
    <location>
        <begin position="194"/>
        <end position="195"/>
    </location>
</feature>
<feature type="helix" evidence="19">
    <location>
        <begin position="9"/>
        <end position="18"/>
    </location>
</feature>
<feature type="strand" evidence="19">
    <location>
        <begin position="20"/>
        <end position="25"/>
    </location>
</feature>
<feature type="turn" evidence="19">
    <location>
        <begin position="27"/>
        <end position="29"/>
    </location>
</feature>
<feature type="strand" evidence="19">
    <location>
        <begin position="30"/>
        <end position="32"/>
    </location>
</feature>
<feature type="helix" evidence="19">
    <location>
        <begin position="40"/>
        <end position="49"/>
    </location>
</feature>
<feature type="strand" evidence="19">
    <location>
        <begin position="53"/>
        <end position="58"/>
    </location>
</feature>
<feature type="helix" evidence="19">
    <location>
        <begin position="65"/>
        <end position="74"/>
    </location>
</feature>
<feature type="helix" evidence="19">
    <location>
        <begin position="82"/>
        <end position="84"/>
    </location>
</feature>
<feature type="strand" evidence="19">
    <location>
        <begin position="85"/>
        <end position="87"/>
    </location>
</feature>
<feature type="helix" evidence="19">
    <location>
        <begin position="88"/>
        <end position="99"/>
    </location>
</feature>
<feature type="turn" evidence="20">
    <location>
        <begin position="104"/>
        <end position="106"/>
    </location>
</feature>
<feature type="strand" evidence="19">
    <location>
        <begin position="109"/>
        <end position="114"/>
    </location>
</feature>
<feature type="helix" evidence="19">
    <location>
        <begin position="116"/>
        <end position="124"/>
    </location>
</feature>
<feature type="strand" evidence="19">
    <location>
        <begin position="132"/>
        <end position="134"/>
    </location>
</feature>
<feature type="strand" evidence="19">
    <location>
        <begin position="139"/>
        <end position="144"/>
    </location>
</feature>
<feature type="helix" evidence="19">
    <location>
        <begin position="152"/>
        <end position="161"/>
    </location>
</feature>
<feature type="strand" evidence="19">
    <location>
        <begin position="167"/>
        <end position="172"/>
    </location>
</feature>
<feature type="strand" evidence="19">
    <location>
        <begin position="176"/>
        <end position="179"/>
    </location>
</feature>
<feature type="strand" evidence="19">
    <location>
        <begin position="185"/>
        <end position="187"/>
    </location>
</feature>
<feature type="helix" evidence="19">
    <location>
        <begin position="189"/>
        <end position="200"/>
    </location>
</feature>
<feature type="helix" evidence="19">
    <location>
        <begin position="213"/>
        <end position="221"/>
    </location>
</feature>
<feature type="helix" evidence="19">
    <location>
        <begin position="226"/>
        <end position="228"/>
    </location>
</feature>
<feature type="strand" evidence="19">
    <location>
        <begin position="229"/>
        <end position="234"/>
    </location>
</feature>
<feature type="turn" evidence="19">
    <location>
        <begin position="236"/>
        <end position="238"/>
    </location>
</feature>
<feature type="helix" evidence="19">
    <location>
        <begin position="239"/>
        <end position="246"/>
    </location>
</feature>
<feature type="strand" evidence="19">
    <location>
        <begin position="249"/>
        <end position="257"/>
    </location>
</feature>
<feature type="helix" evidence="19">
    <location>
        <begin position="260"/>
        <end position="268"/>
    </location>
</feature>
<feature type="helix" evidence="19">
    <location>
        <begin position="272"/>
        <end position="274"/>
    </location>
</feature>
<feature type="strand" evidence="19">
    <location>
        <begin position="277"/>
        <end position="282"/>
    </location>
</feature>
<feature type="helix" evidence="19">
    <location>
        <begin position="283"/>
        <end position="289"/>
    </location>
</feature>
<proteinExistence type="evidence at protein level"/>
<gene>
    <name evidence="13" type="primary">Pdxp</name>
    <name evidence="8" type="synonym">Cin</name>
    <name evidence="8" type="synonym">Plp</name>
    <name type="synonym">Plpp</name>
</gene>
<name>PLPP_MOUSE</name>
<comment type="function">
    <text evidence="3 4 5 6">Functions as a pyridoxal phosphate (PLP) phosphatase, which also catalyzes the dephosphorylation of pyridoxine 5'-phosphate (PNP) and pyridoxamine 5'-phosphate (PMP), with order of substrate preference PLP &gt; PNP &gt; PMP and therefore plays a role in vitamin B6 metabolism (PubMed:24338473, PubMed:24338687, PubMed:25783190). Also functions as a protein serine phosphatase that specifically dephosphorylates 'Ser-3' in proteins of the actin-depolymerizing factor (ADF)/cofilin family like CFL1 and DSTN. Thereby, regulates cofilin-dependent actin cytoskeleton reorganization, being required for normal progress through mitosis and normal cytokinesis. Does not dephosphorylate phosphothreonines in LIMK1. Does not dephosphorylate peptides containing phosphotyrosine (By similarity).</text>
</comment>
<comment type="catalytic activity">
    <reaction evidence="4 5 6">
        <text>pyridoxal 5'-phosphate + H2O = pyridoxal + phosphate</text>
        <dbReference type="Rhea" id="RHEA:20533"/>
        <dbReference type="ChEBI" id="CHEBI:15377"/>
        <dbReference type="ChEBI" id="CHEBI:17310"/>
        <dbReference type="ChEBI" id="CHEBI:43474"/>
        <dbReference type="ChEBI" id="CHEBI:597326"/>
        <dbReference type="EC" id="3.1.3.74"/>
    </reaction>
    <physiologicalReaction direction="left-to-right" evidence="10">
        <dbReference type="Rhea" id="RHEA:20534"/>
    </physiologicalReaction>
</comment>
<comment type="catalytic activity">
    <reaction evidence="3">
        <text>pyridoxine 5'-phosphate + H2O = pyridoxine + phosphate</text>
        <dbReference type="Rhea" id="RHEA:25112"/>
        <dbReference type="ChEBI" id="CHEBI:15377"/>
        <dbReference type="ChEBI" id="CHEBI:16709"/>
        <dbReference type="ChEBI" id="CHEBI:43474"/>
        <dbReference type="ChEBI" id="CHEBI:58589"/>
        <dbReference type="EC" id="3.1.3.74"/>
    </reaction>
    <physiologicalReaction direction="left-to-right" evidence="3">
        <dbReference type="Rhea" id="RHEA:25113"/>
    </physiologicalReaction>
</comment>
<comment type="catalytic activity">
    <reaction evidence="3">
        <text>pyridoxamine + phosphate = pyridoxamine 5'-phosphate + H2O</text>
        <dbReference type="Rhea" id="RHEA:25135"/>
        <dbReference type="ChEBI" id="CHEBI:15377"/>
        <dbReference type="ChEBI" id="CHEBI:43474"/>
        <dbReference type="ChEBI" id="CHEBI:57761"/>
        <dbReference type="ChEBI" id="CHEBI:58451"/>
        <dbReference type="EC" id="3.1.3.74"/>
    </reaction>
    <physiologicalReaction direction="right-to-left" evidence="3">
        <dbReference type="Rhea" id="RHEA:25137"/>
    </physiologicalReaction>
</comment>
<comment type="catalytic activity">
    <reaction evidence="4">
        <text>O-phospho-L-seryl-[protein] + H2O = L-seryl-[protein] + phosphate</text>
        <dbReference type="Rhea" id="RHEA:20629"/>
        <dbReference type="Rhea" id="RHEA-COMP:9863"/>
        <dbReference type="Rhea" id="RHEA-COMP:11604"/>
        <dbReference type="ChEBI" id="CHEBI:15377"/>
        <dbReference type="ChEBI" id="CHEBI:29999"/>
        <dbReference type="ChEBI" id="CHEBI:43474"/>
        <dbReference type="ChEBI" id="CHEBI:83421"/>
        <dbReference type="EC" id="3.1.3.16"/>
    </reaction>
    <physiologicalReaction direction="left-to-right" evidence="4">
        <dbReference type="Rhea" id="RHEA:20630"/>
    </physiologicalReaction>
</comment>
<comment type="cofactor">
    <cofactor evidence="4 5 6">
        <name>Mg(2+)</name>
        <dbReference type="ChEBI" id="CHEBI:18420"/>
    </cofactor>
    <text evidence="4">Divalent metal ions. Mg(2+) is the most effective.</text>
</comment>
<comment type="activity regulation">
    <text evidence="4">Inhibited by beryllium trifluoride.</text>
</comment>
<comment type="biophysicochemical properties">
    <kinetics>
        <KM evidence="5 6">36 uM for pyridoxal 5'-phosphate</KM>
        <Vmax evidence="6">3.6 umol/min/mg enzyme with pyridoxal 5'-phosphate as substrate</Vmax>
        <text evidence="5 6">kcat varies between 1.5 and 2.0 sec(-1) for the dephosphorylation of pyridoxal 5'-phosphate (at pH 7.4 and 22 degrees Celsius).</text>
    </kinetics>
</comment>
<comment type="subunit">
    <text evidence="4 5 6">Homodimer.</text>
</comment>
<comment type="subcellular location">
    <subcellularLocation>
        <location evidence="3">Cytoplasm</location>
        <location evidence="3">Cytosol</location>
    </subcellularLocation>
    <subcellularLocation>
        <location evidence="3">Cytoplasm</location>
        <location evidence="3">Cytoskeleton</location>
    </subcellularLocation>
    <subcellularLocation>
        <location evidence="3">Cell projection</location>
        <location evidence="3">Ruffle membrane</location>
        <topology evidence="1 3">Peripheral membrane protein</topology>
        <orientation evidence="3">Cytoplasmic side</orientation>
    </subcellularLocation>
    <subcellularLocation>
        <location evidence="3">Cell projection</location>
        <location evidence="3">Lamellipodium membrane</location>
        <topology evidence="3">Peripheral membrane protein</topology>
        <orientation evidence="3">Cytoplasmic side</orientation>
    </subcellularLocation>
    <subcellularLocation>
        <location evidence="3">Cell membrane</location>
        <topology evidence="3">Peripheral membrane protein</topology>
        <orientation evidence="3">Cytoplasmic side</orientation>
    </subcellularLocation>
    <text evidence="3">Colocalizes with the actin cytoskeleton in membrane ruffles and lamellipodia. Diffusely distributed throughout the cytosol during pro-metaphase and metaphase. Detected at the dynamic cell poles during telophase. Detected at the cleavage furrow and contractile ring during cytokinesis. Transiently detected at the plasma membrane in late stages of cytokinesis. Detected at the midbody.</text>
</comment>
<comment type="tissue specificity">
    <text evidence="4">Ubiquitous. highly expressed in brain (at protein level).</text>
</comment>
<comment type="similarity">
    <text evidence="9">Belongs to the HAD-like hydrolase superfamily.</text>
</comment>
<evidence type="ECO:0000250" key="1"/>
<evidence type="ECO:0000250" key="2">
    <source>
        <dbReference type="UniProtKB" id="Q3ZBF9"/>
    </source>
</evidence>
<evidence type="ECO:0000250" key="3">
    <source>
        <dbReference type="UniProtKB" id="Q96GD0"/>
    </source>
</evidence>
<evidence type="ECO:0000269" key="4">
    <source>
    </source>
</evidence>
<evidence type="ECO:0000269" key="5">
    <source>
    </source>
</evidence>
<evidence type="ECO:0000269" key="6">
    <source>
    </source>
</evidence>
<evidence type="ECO:0000303" key="7">
    <source>
    </source>
</evidence>
<evidence type="ECO:0000303" key="8">
    <source>
    </source>
</evidence>
<evidence type="ECO:0000305" key="9"/>
<evidence type="ECO:0000305" key="10">
    <source>
    </source>
</evidence>
<evidence type="ECO:0000305" key="11">
    <source>
    </source>
</evidence>
<evidence type="ECO:0000305" key="12">
    <source>
    </source>
</evidence>
<evidence type="ECO:0000312" key="13">
    <source>
        <dbReference type="MGI" id="MGI:1919282"/>
    </source>
</evidence>
<evidence type="ECO:0007744" key="14">
    <source>
        <dbReference type="PDB" id="4BKM"/>
    </source>
</evidence>
<evidence type="ECO:0007744" key="15">
    <source>
        <dbReference type="PDB" id="4BX0"/>
    </source>
</evidence>
<evidence type="ECO:0007744" key="16">
    <source>
        <dbReference type="PDB" id="4BX2"/>
    </source>
</evidence>
<evidence type="ECO:0007744" key="17">
    <source>
        <dbReference type="PDB" id="4BX3"/>
    </source>
</evidence>
<evidence type="ECO:0007744" key="18">
    <source>
        <dbReference type="PDB" id="5AES"/>
    </source>
</evidence>
<evidence type="ECO:0007829" key="19">
    <source>
        <dbReference type="PDB" id="4BX0"/>
    </source>
</evidence>
<evidence type="ECO:0007829" key="20">
    <source>
        <dbReference type="PDB" id="4BX2"/>
    </source>
</evidence>
<keyword id="KW-0002">3D-structure</keyword>
<keyword id="KW-1003">Cell membrane</keyword>
<keyword id="KW-0966">Cell projection</keyword>
<keyword id="KW-0963">Cytoplasm</keyword>
<keyword id="KW-0206">Cytoskeleton</keyword>
<keyword id="KW-0903">Direct protein sequencing</keyword>
<keyword id="KW-0378">Hydrolase</keyword>
<keyword id="KW-0460">Magnesium</keyword>
<keyword id="KW-0472">Membrane</keyword>
<keyword id="KW-0479">Metal-binding</keyword>
<keyword id="KW-0663">Pyridoxal phosphate</keyword>
<keyword id="KW-1185">Reference proteome</keyword>